<feature type="chain" id="PRO_1000058964" description="Sec-independent protein translocase protein TatA">
    <location>
        <begin position="1"/>
        <end position="82"/>
    </location>
</feature>
<feature type="transmembrane region" description="Helical" evidence="1">
    <location>
        <begin position="1"/>
        <end position="21"/>
    </location>
</feature>
<feature type="region of interest" description="Disordered" evidence="2">
    <location>
        <begin position="43"/>
        <end position="82"/>
    </location>
</feature>
<organism>
    <name type="scientific">Pseudomonas paraeruginosa (strain DSM 24068 / PA7)</name>
    <name type="common">Pseudomonas aeruginosa (strain PA7)</name>
    <dbReference type="NCBI Taxonomy" id="381754"/>
    <lineage>
        <taxon>Bacteria</taxon>
        <taxon>Pseudomonadati</taxon>
        <taxon>Pseudomonadota</taxon>
        <taxon>Gammaproteobacteria</taxon>
        <taxon>Pseudomonadales</taxon>
        <taxon>Pseudomonadaceae</taxon>
        <taxon>Pseudomonas</taxon>
        <taxon>Pseudomonas paraeruginosa</taxon>
    </lineage>
</organism>
<dbReference type="EMBL" id="CP000744">
    <property type="protein sequence ID" value="ABR82448.1"/>
    <property type="molecule type" value="Genomic_DNA"/>
</dbReference>
<dbReference type="RefSeq" id="WP_003155137.1">
    <property type="nucleotide sequence ID" value="NC_009656.1"/>
</dbReference>
<dbReference type="SMR" id="A6VDJ1"/>
<dbReference type="GeneID" id="77223605"/>
<dbReference type="KEGG" id="pap:PSPA7_5807"/>
<dbReference type="HOGENOM" id="CLU_086034_5_1_6"/>
<dbReference type="Proteomes" id="UP000001582">
    <property type="component" value="Chromosome"/>
</dbReference>
<dbReference type="GO" id="GO:0033281">
    <property type="term" value="C:TAT protein transport complex"/>
    <property type="evidence" value="ECO:0007669"/>
    <property type="project" value="UniProtKB-UniRule"/>
</dbReference>
<dbReference type="GO" id="GO:0008320">
    <property type="term" value="F:protein transmembrane transporter activity"/>
    <property type="evidence" value="ECO:0007669"/>
    <property type="project" value="UniProtKB-UniRule"/>
</dbReference>
<dbReference type="GO" id="GO:0043953">
    <property type="term" value="P:protein transport by the Tat complex"/>
    <property type="evidence" value="ECO:0007669"/>
    <property type="project" value="UniProtKB-UniRule"/>
</dbReference>
<dbReference type="Gene3D" id="1.20.5.3310">
    <property type="match status" value="1"/>
</dbReference>
<dbReference type="HAMAP" id="MF_00236">
    <property type="entry name" value="TatA_E"/>
    <property type="match status" value="1"/>
</dbReference>
<dbReference type="InterPro" id="IPR003369">
    <property type="entry name" value="TatA/B/E"/>
</dbReference>
<dbReference type="InterPro" id="IPR006312">
    <property type="entry name" value="TatA/E"/>
</dbReference>
<dbReference type="NCBIfam" id="NF001681">
    <property type="entry name" value="PRK00442.1"/>
    <property type="match status" value="1"/>
</dbReference>
<dbReference type="NCBIfam" id="TIGR01411">
    <property type="entry name" value="tatAE"/>
    <property type="match status" value="1"/>
</dbReference>
<dbReference type="PANTHER" id="PTHR42982">
    <property type="entry name" value="SEC-INDEPENDENT PROTEIN TRANSLOCASE PROTEIN TATA"/>
    <property type="match status" value="1"/>
</dbReference>
<dbReference type="PANTHER" id="PTHR42982:SF1">
    <property type="entry name" value="SEC-INDEPENDENT PROTEIN TRANSLOCASE PROTEIN TATA"/>
    <property type="match status" value="1"/>
</dbReference>
<dbReference type="Pfam" id="PF02416">
    <property type="entry name" value="TatA_B_E"/>
    <property type="match status" value="1"/>
</dbReference>
<name>TATA_PSEP7</name>
<sequence length="82" mass="9204">MGIFDWKHWIVILIVVVLVFGTKRLKNLGSDVGEAIKGFRKAVNTEEDDKKEQPAAQPAQPLNQPHTIDAQAQKVEEPARKD</sequence>
<comment type="function">
    <text evidence="1">Part of the twin-arginine translocation (Tat) system that transports large folded proteins containing a characteristic twin-arginine motif in their signal peptide across membranes. TatA could form the protein-conducting channel of the Tat system.</text>
</comment>
<comment type="subunit">
    <text evidence="1">The Tat system comprises two distinct complexes: a TatABC complex, containing multiple copies of TatA, TatB and TatC subunits, and a separate TatA complex, containing only TatA subunits. Substrates initially bind to the TatABC complex, which probably triggers association of the separate TatA complex to form the active translocon.</text>
</comment>
<comment type="subcellular location">
    <subcellularLocation>
        <location evidence="1">Cell inner membrane</location>
        <topology evidence="1">Single-pass membrane protein</topology>
    </subcellularLocation>
</comment>
<comment type="similarity">
    <text evidence="1">Belongs to the TatA/E family.</text>
</comment>
<reference key="1">
    <citation type="submission" date="2007-06" db="EMBL/GenBank/DDBJ databases">
        <authorList>
            <person name="Dodson R.J."/>
            <person name="Harkins D."/>
            <person name="Paulsen I.T."/>
        </authorList>
    </citation>
    <scope>NUCLEOTIDE SEQUENCE [LARGE SCALE GENOMIC DNA]</scope>
    <source>
        <strain>DSM 24068 / PA7</strain>
    </source>
</reference>
<evidence type="ECO:0000255" key="1">
    <source>
        <dbReference type="HAMAP-Rule" id="MF_00236"/>
    </source>
</evidence>
<evidence type="ECO:0000256" key="2">
    <source>
        <dbReference type="SAM" id="MobiDB-lite"/>
    </source>
</evidence>
<proteinExistence type="inferred from homology"/>
<protein>
    <recommendedName>
        <fullName evidence="1">Sec-independent protein translocase protein TatA</fullName>
    </recommendedName>
</protein>
<gene>
    <name evidence="1" type="primary">tatA</name>
    <name type="ordered locus">PSPA7_5807</name>
</gene>
<keyword id="KW-0997">Cell inner membrane</keyword>
<keyword id="KW-1003">Cell membrane</keyword>
<keyword id="KW-0472">Membrane</keyword>
<keyword id="KW-0653">Protein transport</keyword>
<keyword id="KW-0811">Translocation</keyword>
<keyword id="KW-0812">Transmembrane</keyword>
<keyword id="KW-1133">Transmembrane helix</keyword>
<keyword id="KW-0813">Transport</keyword>
<accession>A6VDJ1</accession>